<sequence length="308" mass="34828">MSVTIEDIIKDLELEVINKGKNVNEINVSDINRPGLQFSGFYNYYANERVQIVGKAEWSFLDAMQPDLRKKRLEKYFEFDNPGTIVTRGLIPHKEFLESAIKNKRWILRTNNISTRFINRLMNYLDVKLAPETRLHGVLMDVYGIGILITGESGIGKSETALELIKRGHRLVADDAVDVKQIDGVLNGTSPYITSGMIEVRGMGIIDISALYGLSSVLKTKNIGLVICLEQWKKDENYDRLGIDKEYMDILNVPVRKLKIPIRPGRNLAVIIEAAAANYRYSLVSDVTPVDVISERIQELRKEDGGDE</sequence>
<name>HPRK_CLOK5</name>
<accession>A5N8A0</accession>
<gene>
    <name evidence="1" type="primary">hprK</name>
    <name type="ordered locus">CKL_1489</name>
</gene>
<dbReference type="EC" id="2.7.11.-" evidence="1"/>
<dbReference type="EC" id="2.7.4.-" evidence="1"/>
<dbReference type="EMBL" id="CP000673">
    <property type="protein sequence ID" value="EDK33531.1"/>
    <property type="molecule type" value="Genomic_DNA"/>
</dbReference>
<dbReference type="RefSeq" id="WP_012101881.1">
    <property type="nucleotide sequence ID" value="NC_009706.1"/>
</dbReference>
<dbReference type="SMR" id="A5N8A0"/>
<dbReference type="STRING" id="431943.CKL_1489"/>
<dbReference type="KEGG" id="ckl:CKL_1489"/>
<dbReference type="eggNOG" id="COG1493">
    <property type="taxonomic scope" value="Bacteria"/>
</dbReference>
<dbReference type="HOGENOM" id="CLU_052030_0_1_9"/>
<dbReference type="Proteomes" id="UP000002411">
    <property type="component" value="Chromosome"/>
</dbReference>
<dbReference type="GO" id="GO:0005524">
    <property type="term" value="F:ATP binding"/>
    <property type="evidence" value="ECO:0007669"/>
    <property type="project" value="UniProtKB-UniRule"/>
</dbReference>
<dbReference type="GO" id="GO:0000287">
    <property type="term" value="F:magnesium ion binding"/>
    <property type="evidence" value="ECO:0007669"/>
    <property type="project" value="UniProtKB-UniRule"/>
</dbReference>
<dbReference type="GO" id="GO:0000155">
    <property type="term" value="F:phosphorelay sensor kinase activity"/>
    <property type="evidence" value="ECO:0007669"/>
    <property type="project" value="InterPro"/>
</dbReference>
<dbReference type="GO" id="GO:0004674">
    <property type="term" value="F:protein serine/threonine kinase activity"/>
    <property type="evidence" value="ECO:0007669"/>
    <property type="project" value="UniProtKB-KW"/>
</dbReference>
<dbReference type="GO" id="GO:0004712">
    <property type="term" value="F:protein serine/threonine/tyrosine kinase activity"/>
    <property type="evidence" value="ECO:0007669"/>
    <property type="project" value="UniProtKB-UniRule"/>
</dbReference>
<dbReference type="GO" id="GO:0006109">
    <property type="term" value="P:regulation of carbohydrate metabolic process"/>
    <property type="evidence" value="ECO:0007669"/>
    <property type="project" value="UniProtKB-UniRule"/>
</dbReference>
<dbReference type="CDD" id="cd01918">
    <property type="entry name" value="HprK_C"/>
    <property type="match status" value="1"/>
</dbReference>
<dbReference type="FunFam" id="3.40.50.300:FF:000174">
    <property type="entry name" value="HPr kinase/phosphorylase"/>
    <property type="match status" value="1"/>
</dbReference>
<dbReference type="Gene3D" id="3.40.1390.20">
    <property type="entry name" value="HprK N-terminal domain-like"/>
    <property type="match status" value="1"/>
</dbReference>
<dbReference type="Gene3D" id="3.40.50.300">
    <property type="entry name" value="P-loop containing nucleotide triphosphate hydrolases"/>
    <property type="match status" value="1"/>
</dbReference>
<dbReference type="HAMAP" id="MF_01249">
    <property type="entry name" value="HPr_kinase"/>
    <property type="match status" value="1"/>
</dbReference>
<dbReference type="InterPro" id="IPR003755">
    <property type="entry name" value="HPr(Ser)_kin/Pase"/>
</dbReference>
<dbReference type="InterPro" id="IPR011104">
    <property type="entry name" value="Hpr_kin/Pase_C"/>
</dbReference>
<dbReference type="InterPro" id="IPR011126">
    <property type="entry name" value="Hpr_kin/Pase_Hpr_N"/>
</dbReference>
<dbReference type="InterPro" id="IPR027417">
    <property type="entry name" value="P-loop_NTPase"/>
</dbReference>
<dbReference type="InterPro" id="IPR028979">
    <property type="entry name" value="Ser_kin/Pase_Hpr-like_N_sf"/>
</dbReference>
<dbReference type="NCBIfam" id="TIGR00679">
    <property type="entry name" value="hpr-ser"/>
    <property type="match status" value="1"/>
</dbReference>
<dbReference type="PANTHER" id="PTHR30305:SF1">
    <property type="entry name" value="HPR KINASE_PHOSPHORYLASE"/>
    <property type="match status" value="1"/>
</dbReference>
<dbReference type="PANTHER" id="PTHR30305">
    <property type="entry name" value="PROTEIN YJDM-RELATED"/>
    <property type="match status" value="1"/>
</dbReference>
<dbReference type="Pfam" id="PF07475">
    <property type="entry name" value="Hpr_kinase_C"/>
    <property type="match status" value="1"/>
</dbReference>
<dbReference type="Pfam" id="PF02603">
    <property type="entry name" value="Hpr_kinase_N"/>
    <property type="match status" value="1"/>
</dbReference>
<dbReference type="SUPFAM" id="SSF75138">
    <property type="entry name" value="HprK N-terminal domain-like"/>
    <property type="match status" value="1"/>
</dbReference>
<dbReference type="SUPFAM" id="SSF53795">
    <property type="entry name" value="PEP carboxykinase-like"/>
    <property type="match status" value="1"/>
</dbReference>
<evidence type="ECO:0000255" key="1">
    <source>
        <dbReference type="HAMAP-Rule" id="MF_01249"/>
    </source>
</evidence>
<comment type="function">
    <text evidence="1">Catalyzes the ATP- as well as the pyrophosphate-dependent phosphorylation of a specific serine residue in HPr, a phosphocarrier protein of the phosphoenolpyruvate-dependent sugar phosphotransferase system (PTS). HprK/P also catalyzes the pyrophosphate-producing, inorganic phosphate-dependent dephosphorylation (phosphorolysis) of seryl-phosphorylated HPr (P-Ser-HPr). The two antagonistic activities of HprK/P are regulated by several intracellular metabolites, which change their concentration in response to the absence or presence of rapidly metabolisable carbon sources (glucose, fructose, etc.) in the growth medium. Therefore, by controlling the phosphorylation state of HPr, HPrK/P is a sensor enzyme that plays a major role in the regulation of carbon metabolism and sugar transport: it mediates carbon catabolite repression (CCR), and regulates PTS-catalyzed carbohydrate uptake and inducer exclusion.</text>
</comment>
<comment type="catalytic activity">
    <reaction evidence="1">
        <text>[HPr protein]-L-serine + ATP = [HPr protein]-O-phospho-L-serine + ADP + H(+)</text>
        <dbReference type="Rhea" id="RHEA:46600"/>
        <dbReference type="Rhea" id="RHEA-COMP:11602"/>
        <dbReference type="Rhea" id="RHEA-COMP:11603"/>
        <dbReference type="ChEBI" id="CHEBI:15378"/>
        <dbReference type="ChEBI" id="CHEBI:29999"/>
        <dbReference type="ChEBI" id="CHEBI:30616"/>
        <dbReference type="ChEBI" id="CHEBI:83421"/>
        <dbReference type="ChEBI" id="CHEBI:456216"/>
    </reaction>
</comment>
<comment type="catalytic activity">
    <reaction evidence="1">
        <text>[HPr protein]-O-phospho-L-serine + phosphate + H(+) = [HPr protein]-L-serine + diphosphate</text>
        <dbReference type="Rhea" id="RHEA:46604"/>
        <dbReference type="Rhea" id="RHEA-COMP:11602"/>
        <dbReference type="Rhea" id="RHEA-COMP:11603"/>
        <dbReference type="ChEBI" id="CHEBI:15378"/>
        <dbReference type="ChEBI" id="CHEBI:29999"/>
        <dbReference type="ChEBI" id="CHEBI:33019"/>
        <dbReference type="ChEBI" id="CHEBI:43474"/>
        <dbReference type="ChEBI" id="CHEBI:83421"/>
    </reaction>
</comment>
<comment type="cofactor">
    <cofactor evidence="1">
        <name>Mg(2+)</name>
        <dbReference type="ChEBI" id="CHEBI:18420"/>
    </cofactor>
</comment>
<comment type="subunit">
    <text evidence="1">Homohexamer.</text>
</comment>
<comment type="domain">
    <text evidence="1">The Walker A ATP-binding motif also binds Pi and PPi.</text>
</comment>
<comment type="miscellaneous">
    <text evidence="1">Both phosphorylation and phosphorolysis are carried out by the same active site and suggest a common mechanism for both reactions.</text>
</comment>
<comment type="similarity">
    <text evidence="1">Belongs to the HPrK/P family.</text>
</comment>
<organism>
    <name type="scientific">Clostridium kluyveri (strain ATCC 8527 / DSM 555 / NBRC 12016 / NCIMB 10680 / K1)</name>
    <dbReference type="NCBI Taxonomy" id="431943"/>
    <lineage>
        <taxon>Bacteria</taxon>
        <taxon>Bacillati</taxon>
        <taxon>Bacillota</taxon>
        <taxon>Clostridia</taxon>
        <taxon>Eubacteriales</taxon>
        <taxon>Clostridiaceae</taxon>
        <taxon>Clostridium</taxon>
    </lineage>
</organism>
<protein>
    <recommendedName>
        <fullName evidence="1">HPr kinase/phosphorylase</fullName>
        <shortName evidence="1">HPrK/P</shortName>
        <ecNumber evidence="1">2.7.11.-</ecNumber>
        <ecNumber evidence="1">2.7.4.-</ecNumber>
    </recommendedName>
    <alternativeName>
        <fullName evidence="1">HPr(Ser) kinase/phosphorylase</fullName>
    </alternativeName>
</protein>
<keyword id="KW-0067">ATP-binding</keyword>
<keyword id="KW-0119">Carbohydrate metabolism</keyword>
<keyword id="KW-0418">Kinase</keyword>
<keyword id="KW-0460">Magnesium</keyword>
<keyword id="KW-0479">Metal-binding</keyword>
<keyword id="KW-0511">Multifunctional enzyme</keyword>
<keyword id="KW-0547">Nucleotide-binding</keyword>
<keyword id="KW-1185">Reference proteome</keyword>
<keyword id="KW-0723">Serine/threonine-protein kinase</keyword>
<keyword id="KW-0808">Transferase</keyword>
<proteinExistence type="inferred from homology"/>
<feature type="chain" id="PRO_1000085792" description="HPr kinase/phosphorylase">
    <location>
        <begin position="1"/>
        <end position="308"/>
    </location>
</feature>
<feature type="region of interest" description="Important for the catalytic mechanism of both phosphorylation and dephosphorylation" evidence="1">
    <location>
        <begin position="198"/>
        <end position="207"/>
    </location>
</feature>
<feature type="region of interest" description="Important for the catalytic mechanism of dephosphorylation" evidence="1">
    <location>
        <begin position="261"/>
        <end position="266"/>
    </location>
</feature>
<feature type="active site" evidence="1">
    <location>
        <position position="136"/>
    </location>
</feature>
<feature type="active site" evidence="1">
    <location>
        <position position="157"/>
    </location>
</feature>
<feature type="active site" description="Proton acceptor; for phosphorylation activity. Proton donor; for dephosphorylation activity" evidence="1">
    <location>
        <position position="175"/>
    </location>
</feature>
<feature type="active site" evidence="1">
    <location>
        <position position="240"/>
    </location>
</feature>
<feature type="binding site" evidence="1">
    <location>
        <begin position="151"/>
        <end position="158"/>
    </location>
    <ligand>
        <name>ATP</name>
        <dbReference type="ChEBI" id="CHEBI:30616"/>
    </ligand>
</feature>
<feature type="binding site" evidence="1">
    <location>
        <position position="158"/>
    </location>
    <ligand>
        <name>Mg(2+)</name>
        <dbReference type="ChEBI" id="CHEBI:18420"/>
    </ligand>
</feature>
<feature type="binding site" evidence="1">
    <location>
        <position position="199"/>
    </location>
    <ligand>
        <name>Mg(2+)</name>
        <dbReference type="ChEBI" id="CHEBI:18420"/>
    </ligand>
</feature>
<reference key="1">
    <citation type="journal article" date="2008" name="Proc. Natl. Acad. Sci. U.S.A.">
        <title>The genome of Clostridium kluyveri, a strict anaerobe with unique metabolic features.</title>
        <authorList>
            <person name="Seedorf H."/>
            <person name="Fricke W.F."/>
            <person name="Veith B."/>
            <person name="Brueggemann H."/>
            <person name="Liesegang H."/>
            <person name="Strittmatter A."/>
            <person name="Miethke M."/>
            <person name="Buckel W."/>
            <person name="Hinderberger J."/>
            <person name="Li F."/>
            <person name="Hagemeier C."/>
            <person name="Thauer R.K."/>
            <person name="Gottschalk G."/>
        </authorList>
    </citation>
    <scope>NUCLEOTIDE SEQUENCE [LARGE SCALE GENOMIC DNA]</scope>
    <source>
        <strain>ATCC 8527 / DSM 555 / NBRC 12016 / NCIMB 10680 / K1</strain>
    </source>
</reference>